<dbReference type="EMBL" id="Z12626">
    <property type="protein sequence ID" value="CAA78273.1"/>
    <property type="molecule type" value="Genomic_DNA"/>
</dbReference>
<dbReference type="SMR" id="P68513"/>
<dbReference type="GO" id="GO:0031966">
    <property type="term" value="C:mitochondrial membrane"/>
    <property type="evidence" value="ECO:0007669"/>
    <property type="project" value="UniProtKB-SubCell"/>
</dbReference>
<dbReference type="InterPro" id="IPR008527">
    <property type="entry name" value="DUF809"/>
</dbReference>
<dbReference type="Pfam" id="PF05663">
    <property type="entry name" value="DUF809"/>
    <property type="match status" value="1"/>
</dbReference>
<organism>
    <name type="scientific">Brassica napus</name>
    <name type="common">Rape</name>
    <dbReference type="NCBI Taxonomy" id="3708"/>
    <lineage>
        <taxon>Eukaryota</taxon>
        <taxon>Viridiplantae</taxon>
        <taxon>Streptophyta</taxon>
        <taxon>Embryophyta</taxon>
        <taxon>Tracheophyta</taxon>
        <taxon>Spermatophyta</taxon>
        <taxon>Magnoliopsida</taxon>
        <taxon>eudicotyledons</taxon>
        <taxon>Gunneridae</taxon>
        <taxon>Pentapetalae</taxon>
        <taxon>rosids</taxon>
        <taxon>malvids</taxon>
        <taxon>Brassicales</taxon>
        <taxon>Brassicaceae</taxon>
        <taxon>Brassiceae</taxon>
        <taxon>Brassica</taxon>
    </lineage>
</organism>
<evidence type="ECO:0000255" key="1"/>
<evidence type="ECO:0000256" key="2">
    <source>
        <dbReference type="SAM" id="MobiDB-lite"/>
    </source>
</evidence>
<evidence type="ECO:0000305" key="3"/>
<name>YMX1_BRANA</name>
<reference key="1">
    <citation type="journal article" date="1992" name="Mol. Gen. Genet.">
        <title>Sequence and transcript analysis of the Nco2.5 Ogura-specific fragment correlated with cytoplasmic male sterility in Brassica cybrids.</title>
        <authorList>
            <person name="Bonhomme S."/>
            <person name="Budar F."/>
            <person name="Lancelin D."/>
            <person name="Small I."/>
            <person name="Defrance M.-C."/>
            <person name="Pelletier G."/>
        </authorList>
    </citation>
    <scope>NUCLEOTIDE SEQUENCE [GENOMIC DNA]</scope>
    <source>
        <tissue>Leaf</tissue>
    </source>
</reference>
<feature type="chain" id="PRO_0000196899" description="Uncharacterized mitochondrial protein ORF138">
    <location>
        <begin position="1"/>
        <end position="138"/>
    </location>
</feature>
<feature type="transmembrane region" description="Helical" evidence="1">
    <location>
        <begin position="19"/>
        <end position="40"/>
    </location>
</feature>
<feature type="repeat" description="1">
    <location>
        <begin position="94"/>
        <end position="106"/>
    </location>
</feature>
<feature type="repeat" description="2">
    <location>
        <begin position="107"/>
        <end position="119"/>
    </location>
</feature>
<feature type="repeat" description="3">
    <location>
        <begin position="120"/>
        <end position="132"/>
    </location>
</feature>
<feature type="region of interest" description="3 X 13 AA tandem repeats of K-G-E-I-E-G-K-E-E-K-K-E-[GV]">
    <location>
        <begin position="94"/>
        <end position="132"/>
    </location>
</feature>
<feature type="region of interest" description="Disordered" evidence="2">
    <location>
        <begin position="98"/>
        <end position="138"/>
    </location>
</feature>
<accession>P68513</accession>
<accession>Q03150</accession>
<geneLocation type="mitochondrion"/>
<comment type="function">
    <text>May be involved in cytoplasmic male sterility (CMS) by leading to pollen abortion. Not expressed in fertile (normal) plants.</text>
</comment>
<comment type="subcellular location">
    <subcellularLocation>
        <location evidence="3">Mitochondrion membrane</location>
        <topology evidence="3">Single-pass membrane protein</topology>
    </subcellularLocation>
</comment>
<protein>
    <recommendedName>
        <fullName>Uncharacterized mitochondrial protein ORF138</fullName>
    </recommendedName>
</protein>
<keyword id="KW-0472">Membrane</keyword>
<keyword id="KW-0496">Mitochondrion</keyword>
<keyword id="KW-0677">Repeat</keyword>
<keyword id="KW-0812">Transmembrane</keyword>
<keyword id="KW-1133">Transmembrane helix</keyword>
<proteinExistence type="predicted"/>
<sequence>MITFFEKLSTFCHNLTPTECKVSVISFFLLAFLLMAHIWLSWFSNNQHCLRTMRHLEKLKIPYEFQYGWLGVKITIKSNVPNDEVTKKVSPIIKGEIEGKEEKKEGKGEIEGKEEKKEGKGEIEGKEEKKEVENGPRK</sequence>